<name>SPP24_MOUSE</name>
<protein>
    <recommendedName>
        <fullName>Secreted phosphoprotein 24</fullName>
        <shortName>Spp-24</shortName>
    </recommendedName>
    <alternativeName>
        <fullName>Secreted phosphoprotein 2</fullName>
    </alternativeName>
</protein>
<gene>
    <name type="primary">Spp2</name>
    <name type="synonym">Spp24</name>
</gene>
<dbReference type="EMBL" id="AK002814">
    <property type="protein sequence ID" value="BAB22379.1"/>
    <property type="molecule type" value="mRNA"/>
</dbReference>
<dbReference type="EMBL" id="BC027494">
    <property type="protein sequence ID" value="AAH27494.1"/>
    <property type="molecule type" value="mRNA"/>
</dbReference>
<dbReference type="CCDS" id="CCDS15145.1"/>
<dbReference type="RefSeq" id="NP_083545.1">
    <property type="nucleotide sequence ID" value="NM_029269.3"/>
</dbReference>
<dbReference type="SMR" id="Q8K1I3"/>
<dbReference type="BioGRID" id="217451">
    <property type="interactions" value="1"/>
</dbReference>
<dbReference type="FunCoup" id="Q8K1I3">
    <property type="interactions" value="2"/>
</dbReference>
<dbReference type="STRING" id="10090.ENSMUSP00000027518"/>
<dbReference type="iPTMnet" id="Q8K1I3"/>
<dbReference type="PhosphoSitePlus" id="Q8K1I3"/>
<dbReference type="jPOST" id="Q8K1I3"/>
<dbReference type="PaxDb" id="10090-ENSMUSP00000027518"/>
<dbReference type="PeptideAtlas" id="Q8K1I3"/>
<dbReference type="ProteomicsDB" id="257325"/>
<dbReference type="Antibodypedia" id="34459">
    <property type="antibodies" value="45 antibodies from 6 providers"/>
</dbReference>
<dbReference type="DNASU" id="75396"/>
<dbReference type="Ensembl" id="ENSMUST00000027518.12">
    <property type="protein sequence ID" value="ENSMUSP00000027518.6"/>
    <property type="gene ID" value="ENSMUSG00000026295.13"/>
</dbReference>
<dbReference type="GeneID" id="75396"/>
<dbReference type="KEGG" id="mmu:75396"/>
<dbReference type="UCSC" id="uc007byq.1">
    <property type="organism name" value="mouse"/>
</dbReference>
<dbReference type="AGR" id="MGI:1922646"/>
<dbReference type="CTD" id="6694"/>
<dbReference type="MGI" id="MGI:1922646">
    <property type="gene designation" value="Spp2"/>
</dbReference>
<dbReference type="VEuPathDB" id="HostDB:ENSMUSG00000026295"/>
<dbReference type="eggNOG" id="ENOG502S7TB">
    <property type="taxonomic scope" value="Eukaryota"/>
</dbReference>
<dbReference type="GeneTree" id="ENSGT00390000009001"/>
<dbReference type="HOGENOM" id="CLU_115216_0_0_1"/>
<dbReference type="InParanoid" id="Q8K1I3"/>
<dbReference type="OMA" id="CRSTVQM"/>
<dbReference type="OrthoDB" id="9944258at2759"/>
<dbReference type="PhylomeDB" id="Q8K1I3"/>
<dbReference type="TreeFam" id="TF335972"/>
<dbReference type="Reactome" id="R-MMU-114608">
    <property type="pathway name" value="Platelet degranulation"/>
</dbReference>
<dbReference type="Reactome" id="R-MMU-381426">
    <property type="pathway name" value="Regulation of Insulin-like Growth Factor (IGF) transport and uptake by Insulin-like Growth Factor Binding Proteins (IGFBPs)"/>
</dbReference>
<dbReference type="Reactome" id="R-MMU-8957275">
    <property type="pathway name" value="Post-translational protein phosphorylation"/>
</dbReference>
<dbReference type="BioGRID-ORCS" id="75396">
    <property type="hits" value="2 hits in 77 CRISPR screens"/>
</dbReference>
<dbReference type="ChiTaRS" id="Spp2">
    <property type="organism name" value="mouse"/>
</dbReference>
<dbReference type="PRO" id="PR:Q8K1I3"/>
<dbReference type="Proteomes" id="UP000000589">
    <property type="component" value="Chromosome 1"/>
</dbReference>
<dbReference type="RNAct" id="Q8K1I3">
    <property type="molecule type" value="protein"/>
</dbReference>
<dbReference type="Bgee" id="ENSMUSG00000026295">
    <property type="expression patterns" value="Expressed in right kidney and 59 other cell types or tissues"/>
</dbReference>
<dbReference type="ExpressionAtlas" id="Q8K1I3">
    <property type="expression patterns" value="baseline and differential"/>
</dbReference>
<dbReference type="GO" id="GO:0005576">
    <property type="term" value="C:extracellular region"/>
    <property type="evidence" value="ECO:0007669"/>
    <property type="project" value="UniProtKB-SubCell"/>
</dbReference>
<dbReference type="GO" id="GO:0032991">
    <property type="term" value="C:protein-containing complex"/>
    <property type="evidence" value="ECO:0007669"/>
    <property type="project" value="Ensembl"/>
</dbReference>
<dbReference type="GO" id="GO:0046849">
    <property type="term" value="P:bone remodeling"/>
    <property type="evidence" value="ECO:0007669"/>
    <property type="project" value="InterPro"/>
</dbReference>
<dbReference type="GO" id="GO:0065003">
    <property type="term" value="P:protein-containing complex assembly"/>
    <property type="evidence" value="ECO:0007669"/>
    <property type="project" value="Ensembl"/>
</dbReference>
<dbReference type="Gene3D" id="3.10.450.10">
    <property type="match status" value="1"/>
</dbReference>
<dbReference type="InterPro" id="IPR046350">
    <property type="entry name" value="Cystatin_sf"/>
</dbReference>
<dbReference type="InterPro" id="IPR010892">
    <property type="entry name" value="Spp-24"/>
</dbReference>
<dbReference type="PANTHER" id="PTHR15444">
    <property type="entry name" value="SECRETED PHOSPHOPROTEIN 24"/>
    <property type="match status" value="1"/>
</dbReference>
<dbReference type="PANTHER" id="PTHR15444:SF4">
    <property type="entry name" value="SECRETED PHOSPHOPROTEIN 24"/>
    <property type="match status" value="1"/>
</dbReference>
<dbReference type="Pfam" id="PF07448">
    <property type="entry name" value="Spp-24"/>
    <property type="match status" value="1"/>
</dbReference>
<dbReference type="SUPFAM" id="SSF54403">
    <property type="entry name" value="Cystatin/monellin"/>
    <property type="match status" value="1"/>
</dbReference>
<feature type="signal peptide" evidence="1">
    <location>
        <begin position="1"/>
        <end position="23"/>
    </location>
</feature>
<feature type="chain" id="PRO_0000022404" description="Secreted phosphoprotein 24">
    <location>
        <begin position="24"/>
        <end position="203"/>
    </location>
</feature>
<feature type="modified residue" description="Phosphoserine" evidence="2">
    <location>
        <position position="90"/>
    </location>
</feature>
<feature type="modified residue" description="Phosphoserine" evidence="3">
    <location>
        <position position="137"/>
    </location>
</feature>
<feature type="modified residue" description="Phosphoserine" evidence="3">
    <location>
        <position position="138"/>
    </location>
</feature>
<feature type="modified residue" description="Phosphoserine" evidence="5 6">
    <location>
        <position position="162"/>
    </location>
</feature>
<feature type="modified residue" description="Phosphoserine" evidence="6">
    <location>
        <position position="165"/>
    </location>
</feature>
<feature type="modified residue" description="Phosphoserine" evidence="3">
    <location>
        <position position="174"/>
    </location>
</feature>
<feature type="disulfide bond" evidence="1">
    <location>
        <begin position="86"/>
        <end position="96"/>
    </location>
</feature>
<feature type="disulfide bond" evidence="1">
    <location>
        <begin position="109"/>
        <end position="127"/>
    </location>
</feature>
<feature type="sequence conflict" description="In Ref. 2; AAH27494." evidence="4" ref="2">
    <original>C</original>
    <variation>F</variation>
    <location>
        <position position="109"/>
    </location>
</feature>
<accession>Q8K1I3</accession>
<accession>Q9DCG1</accession>
<evidence type="ECO:0000250" key="1"/>
<evidence type="ECO:0000250" key="2">
    <source>
        <dbReference type="UniProtKB" id="Q13103"/>
    </source>
</evidence>
<evidence type="ECO:0000250" key="3">
    <source>
        <dbReference type="UniProtKB" id="Q62740"/>
    </source>
</evidence>
<evidence type="ECO:0000305" key="4"/>
<evidence type="ECO:0007744" key="5">
    <source>
    </source>
</evidence>
<evidence type="ECO:0007744" key="6">
    <source>
    </source>
</evidence>
<comment type="function">
    <text evidence="1">Could coordinate an aspect of bone turnover.</text>
</comment>
<comment type="subcellular location">
    <subcellularLocation>
        <location>Secreted</location>
    </subcellularLocation>
</comment>
<comment type="PTM">
    <text evidence="1">Phosphorylation sites are present in the extracellular medium.</text>
</comment>
<comment type="similarity">
    <text evidence="4">Belongs to the SPP2 family.</text>
</comment>
<sequence length="203" mass="23136">MEQAMLKTLALLVLGMHYWCATGFPVYDYDPSSLQEALSASVAKVNSQSLSPYLFRATRSSLKRVNVLDEDTLVMNLEFSVQETTCLRDSGDPSTCAFQRGYSVPTAACRSTVQMSKGQVKDVWAHCRWASSSESNSSEEMMFGDMARSHRRRNDYLLGFLSDESRSEQFRDRSLEIMRRGQPPAHRRFLNLHRRARVNSGFE</sequence>
<reference key="1">
    <citation type="journal article" date="2005" name="Science">
        <title>The transcriptional landscape of the mammalian genome.</title>
        <authorList>
            <person name="Carninci P."/>
            <person name="Kasukawa T."/>
            <person name="Katayama S."/>
            <person name="Gough J."/>
            <person name="Frith M.C."/>
            <person name="Maeda N."/>
            <person name="Oyama R."/>
            <person name="Ravasi T."/>
            <person name="Lenhard B."/>
            <person name="Wells C."/>
            <person name="Kodzius R."/>
            <person name="Shimokawa K."/>
            <person name="Bajic V.B."/>
            <person name="Brenner S.E."/>
            <person name="Batalov S."/>
            <person name="Forrest A.R."/>
            <person name="Zavolan M."/>
            <person name="Davis M.J."/>
            <person name="Wilming L.G."/>
            <person name="Aidinis V."/>
            <person name="Allen J.E."/>
            <person name="Ambesi-Impiombato A."/>
            <person name="Apweiler R."/>
            <person name="Aturaliya R.N."/>
            <person name="Bailey T.L."/>
            <person name="Bansal M."/>
            <person name="Baxter L."/>
            <person name="Beisel K.W."/>
            <person name="Bersano T."/>
            <person name="Bono H."/>
            <person name="Chalk A.M."/>
            <person name="Chiu K.P."/>
            <person name="Choudhary V."/>
            <person name="Christoffels A."/>
            <person name="Clutterbuck D.R."/>
            <person name="Crowe M.L."/>
            <person name="Dalla E."/>
            <person name="Dalrymple B.P."/>
            <person name="de Bono B."/>
            <person name="Della Gatta G."/>
            <person name="di Bernardo D."/>
            <person name="Down T."/>
            <person name="Engstrom P."/>
            <person name="Fagiolini M."/>
            <person name="Faulkner G."/>
            <person name="Fletcher C.F."/>
            <person name="Fukushima T."/>
            <person name="Furuno M."/>
            <person name="Futaki S."/>
            <person name="Gariboldi M."/>
            <person name="Georgii-Hemming P."/>
            <person name="Gingeras T.R."/>
            <person name="Gojobori T."/>
            <person name="Green R.E."/>
            <person name="Gustincich S."/>
            <person name="Harbers M."/>
            <person name="Hayashi Y."/>
            <person name="Hensch T.K."/>
            <person name="Hirokawa N."/>
            <person name="Hill D."/>
            <person name="Huminiecki L."/>
            <person name="Iacono M."/>
            <person name="Ikeo K."/>
            <person name="Iwama A."/>
            <person name="Ishikawa T."/>
            <person name="Jakt M."/>
            <person name="Kanapin A."/>
            <person name="Katoh M."/>
            <person name="Kawasawa Y."/>
            <person name="Kelso J."/>
            <person name="Kitamura H."/>
            <person name="Kitano H."/>
            <person name="Kollias G."/>
            <person name="Krishnan S.P."/>
            <person name="Kruger A."/>
            <person name="Kummerfeld S.K."/>
            <person name="Kurochkin I.V."/>
            <person name="Lareau L.F."/>
            <person name="Lazarevic D."/>
            <person name="Lipovich L."/>
            <person name="Liu J."/>
            <person name="Liuni S."/>
            <person name="McWilliam S."/>
            <person name="Madan Babu M."/>
            <person name="Madera M."/>
            <person name="Marchionni L."/>
            <person name="Matsuda H."/>
            <person name="Matsuzawa S."/>
            <person name="Miki H."/>
            <person name="Mignone F."/>
            <person name="Miyake S."/>
            <person name="Morris K."/>
            <person name="Mottagui-Tabar S."/>
            <person name="Mulder N."/>
            <person name="Nakano N."/>
            <person name="Nakauchi H."/>
            <person name="Ng P."/>
            <person name="Nilsson R."/>
            <person name="Nishiguchi S."/>
            <person name="Nishikawa S."/>
            <person name="Nori F."/>
            <person name="Ohara O."/>
            <person name="Okazaki Y."/>
            <person name="Orlando V."/>
            <person name="Pang K.C."/>
            <person name="Pavan W.J."/>
            <person name="Pavesi G."/>
            <person name="Pesole G."/>
            <person name="Petrovsky N."/>
            <person name="Piazza S."/>
            <person name="Reed J."/>
            <person name="Reid J.F."/>
            <person name="Ring B.Z."/>
            <person name="Ringwald M."/>
            <person name="Rost B."/>
            <person name="Ruan Y."/>
            <person name="Salzberg S.L."/>
            <person name="Sandelin A."/>
            <person name="Schneider C."/>
            <person name="Schoenbach C."/>
            <person name="Sekiguchi K."/>
            <person name="Semple C.A."/>
            <person name="Seno S."/>
            <person name="Sessa L."/>
            <person name="Sheng Y."/>
            <person name="Shibata Y."/>
            <person name="Shimada H."/>
            <person name="Shimada K."/>
            <person name="Silva D."/>
            <person name="Sinclair B."/>
            <person name="Sperling S."/>
            <person name="Stupka E."/>
            <person name="Sugiura K."/>
            <person name="Sultana R."/>
            <person name="Takenaka Y."/>
            <person name="Taki K."/>
            <person name="Tammoja K."/>
            <person name="Tan S.L."/>
            <person name="Tang S."/>
            <person name="Taylor M.S."/>
            <person name="Tegner J."/>
            <person name="Teichmann S.A."/>
            <person name="Ueda H.R."/>
            <person name="van Nimwegen E."/>
            <person name="Verardo R."/>
            <person name="Wei C.L."/>
            <person name="Yagi K."/>
            <person name="Yamanishi H."/>
            <person name="Zabarovsky E."/>
            <person name="Zhu S."/>
            <person name="Zimmer A."/>
            <person name="Hide W."/>
            <person name="Bult C."/>
            <person name="Grimmond S.M."/>
            <person name="Teasdale R.D."/>
            <person name="Liu E.T."/>
            <person name="Brusic V."/>
            <person name="Quackenbush J."/>
            <person name="Wahlestedt C."/>
            <person name="Mattick J.S."/>
            <person name="Hume D.A."/>
            <person name="Kai C."/>
            <person name="Sasaki D."/>
            <person name="Tomaru Y."/>
            <person name="Fukuda S."/>
            <person name="Kanamori-Katayama M."/>
            <person name="Suzuki M."/>
            <person name="Aoki J."/>
            <person name="Arakawa T."/>
            <person name="Iida J."/>
            <person name="Imamura K."/>
            <person name="Itoh M."/>
            <person name="Kato T."/>
            <person name="Kawaji H."/>
            <person name="Kawagashira N."/>
            <person name="Kawashima T."/>
            <person name="Kojima M."/>
            <person name="Kondo S."/>
            <person name="Konno H."/>
            <person name="Nakano K."/>
            <person name="Ninomiya N."/>
            <person name="Nishio T."/>
            <person name="Okada M."/>
            <person name="Plessy C."/>
            <person name="Shibata K."/>
            <person name="Shiraki T."/>
            <person name="Suzuki S."/>
            <person name="Tagami M."/>
            <person name="Waki K."/>
            <person name="Watahiki A."/>
            <person name="Okamura-Oho Y."/>
            <person name="Suzuki H."/>
            <person name="Kawai J."/>
            <person name="Hayashizaki Y."/>
        </authorList>
    </citation>
    <scope>NUCLEOTIDE SEQUENCE [LARGE SCALE MRNA]</scope>
    <source>
        <strain>C57BL/6J</strain>
        <tissue>Kidney</tissue>
    </source>
</reference>
<reference key="2">
    <citation type="journal article" date="2004" name="Genome Res.">
        <title>The status, quality, and expansion of the NIH full-length cDNA project: the Mammalian Gene Collection (MGC).</title>
        <authorList>
            <consortium name="The MGC Project Team"/>
        </authorList>
    </citation>
    <scope>NUCLEOTIDE SEQUENCE [LARGE SCALE MRNA]</scope>
    <source>
        <tissue>Uterus</tissue>
    </source>
</reference>
<reference key="3">
    <citation type="journal article" date="2007" name="Proc. Natl. Acad. Sci. U.S.A.">
        <title>Large-scale phosphorylation analysis of mouse liver.</title>
        <authorList>
            <person name="Villen J."/>
            <person name="Beausoleil S.A."/>
            <person name="Gerber S.A."/>
            <person name="Gygi S.P."/>
        </authorList>
    </citation>
    <scope>PHOSPHORYLATION [LARGE SCALE ANALYSIS] AT SER-162</scope>
    <scope>IDENTIFICATION BY MASS SPECTROMETRY [LARGE SCALE ANALYSIS]</scope>
    <source>
        <tissue>Liver</tissue>
    </source>
</reference>
<reference key="4">
    <citation type="journal article" date="2010" name="Cell">
        <title>A tissue-specific atlas of mouse protein phosphorylation and expression.</title>
        <authorList>
            <person name="Huttlin E.L."/>
            <person name="Jedrychowski M.P."/>
            <person name="Elias J.E."/>
            <person name="Goswami T."/>
            <person name="Rad R."/>
            <person name="Beausoleil S.A."/>
            <person name="Villen J."/>
            <person name="Haas W."/>
            <person name="Sowa M.E."/>
            <person name="Gygi S.P."/>
        </authorList>
    </citation>
    <scope>PHOSPHORYLATION [LARGE SCALE ANALYSIS] AT SER-162 AND SER-165</scope>
    <scope>IDENTIFICATION BY MASS SPECTROMETRY [LARGE SCALE ANALYSIS]</scope>
    <source>
        <tissue>Brain</tissue>
        <tissue>Brown adipose tissue</tissue>
        <tissue>Heart</tissue>
        <tissue>Kidney</tissue>
        <tissue>Liver</tissue>
        <tissue>Lung</tissue>
        <tissue>Spleen</tissue>
    </source>
</reference>
<proteinExistence type="evidence at protein level"/>
<organism>
    <name type="scientific">Mus musculus</name>
    <name type="common">Mouse</name>
    <dbReference type="NCBI Taxonomy" id="10090"/>
    <lineage>
        <taxon>Eukaryota</taxon>
        <taxon>Metazoa</taxon>
        <taxon>Chordata</taxon>
        <taxon>Craniata</taxon>
        <taxon>Vertebrata</taxon>
        <taxon>Euteleostomi</taxon>
        <taxon>Mammalia</taxon>
        <taxon>Eutheria</taxon>
        <taxon>Euarchontoglires</taxon>
        <taxon>Glires</taxon>
        <taxon>Rodentia</taxon>
        <taxon>Myomorpha</taxon>
        <taxon>Muroidea</taxon>
        <taxon>Muridae</taxon>
        <taxon>Murinae</taxon>
        <taxon>Mus</taxon>
        <taxon>Mus</taxon>
    </lineage>
</organism>
<keyword id="KW-1015">Disulfide bond</keyword>
<keyword id="KW-0597">Phosphoprotein</keyword>
<keyword id="KW-1185">Reference proteome</keyword>
<keyword id="KW-0964">Secreted</keyword>
<keyword id="KW-0732">Signal</keyword>